<reference key="1">
    <citation type="journal article" date="1996" name="Microbiology">
        <title>Sequencing of a 65 kb region of the Bacillus subtilis genome containing the lic and cel loci, and creation of a 177 kb contig covering the gnt-sacXY region.</title>
        <authorList>
            <person name="Yoshida K."/>
            <person name="Shindo K."/>
            <person name="Sano H."/>
            <person name="Seki S."/>
            <person name="Fujimura M."/>
            <person name="Yanai N."/>
            <person name="Miwa Y."/>
            <person name="Fujita Y."/>
        </authorList>
    </citation>
    <scope>NUCLEOTIDE SEQUENCE [GENOMIC DNA]</scope>
    <source>
        <strain>168 / BGSC1A1</strain>
    </source>
</reference>
<reference key="2">
    <citation type="journal article" date="1997" name="Nature">
        <title>The complete genome sequence of the Gram-positive bacterium Bacillus subtilis.</title>
        <authorList>
            <person name="Kunst F."/>
            <person name="Ogasawara N."/>
            <person name="Moszer I."/>
            <person name="Albertini A.M."/>
            <person name="Alloni G."/>
            <person name="Azevedo V."/>
            <person name="Bertero M.G."/>
            <person name="Bessieres P."/>
            <person name="Bolotin A."/>
            <person name="Borchert S."/>
            <person name="Borriss R."/>
            <person name="Boursier L."/>
            <person name="Brans A."/>
            <person name="Braun M."/>
            <person name="Brignell S.C."/>
            <person name="Bron S."/>
            <person name="Brouillet S."/>
            <person name="Bruschi C.V."/>
            <person name="Caldwell B."/>
            <person name="Capuano V."/>
            <person name="Carter N.M."/>
            <person name="Choi S.-K."/>
            <person name="Codani J.-J."/>
            <person name="Connerton I.F."/>
            <person name="Cummings N.J."/>
            <person name="Daniel R.A."/>
            <person name="Denizot F."/>
            <person name="Devine K.M."/>
            <person name="Duesterhoeft A."/>
            <person name="Ehrlich S.D."/>
            <person name="Emmerson P.T."/>
            <person name="Entian K.-D."/>
            <person name="Errington J."/>
            <person name="Fabret C."/>
            <person name="Ferrari E."/>
            <person name="Foulger D."/>
            <person name="Fritz C."/>
            <person name="Fujita M."/>
            <person name="Fujita Y."/>
            <person name="Fuma S."/>
            <person name="Galizzi A."/>
            <person name="Galleron N."/>
            <person name="Ghim S.-Y."/>
            <person name="Glaser P."/>
            <person name="Goffeau A."/>
            <person name="Golightly E.J."/>
            <person name="Grandi G."/>
            <person name="Guiseppi G."/>
            <person name="Guy B.J."/>
            <person name="Haga K."/>
            <person name="Haiech J."/>
            <person name="Harwood C.R."/>
            <person name="Henaut A."/>
            <person name="Hilbert H."/>
            <person name="Holsappel S."/>
            <person name="Hosono S."/>
            <person name="Hullo M.-F."/>
            <person name="Itaya M."/>
            <person name="Jones L.-M."/>
            <person name="Joris B."/>
            <person name="Karamata D."/>
            <person name="Kasahara Y."/>
            <person name="Klaerr-Blanchard M."/>
            <person name="Klein C."/>
            <person name="Kobayashi Y."/>
            <person name="Koetter P."/>
            <person name="Koningstein G."/>
            <person name="Krogh S."/>
            <person name="Kumano M."/>
            <person name="Kurita K."/>
            <person name="Lapidus A."/>
            <person name="Lardinois S."/>
            <person name="Lauber J."/>
            <person name="Lazarevic V."/>
            <person name="Lee S.-M."/>
            <person name="Levine A."/>
            <person name="Liu H."/>
            <person name="Masuda S."/>
            <person name="Mauel C."/>
            <person name="Medigue C."/>
            <person name="Medina N."/>
            <person name="Mellado R.P."/>
            <person name="Mizuno M."/>
            <person name="Moestl D."/>
            <person name="Nakai S."/>
            <person name="Noback M."/>
            <person name="Noone D."/>
            <person name="O'Reilly M."/>
            <person name="Ogawa K."/>
            <person name="Ogiwara A."/>
            <person name="Oudega B."/>
            <person name="Park S.-H."/>
            <person name="Parro V."/>
            <person name="Pohl T.M."/>
            <person name="Portetelle D."/>
            <person name="Porwollik S."/>
            <person name="Prescott A.M."/>
            <person name="Presecan E."/>
            <person name="Pujic P."/>
            <person name="Purnelle B."/>
            <person name="Rapoport G."/>
            <person name="Rey M."/>
            <person name="Reynolds S."/>
            <person name="Rieger M."/>
            <person name="Rivolta C."/>
            <person name="Rocha E."/>
            <person name="Roche B."/>
            <person name="Rose M."/>
            <person name="Sadaie Y."/>
            <person name="Sato T."/>
            <person name="Scanlan E."/>
            <person name="Schleich S."/>
            <person name="Schroeter R."/>
            <person name="Scoffone F."/>
            <person name="Sekiguchi J."/>
            <person name="Sekowska A."/>
            <person name="Seror S.J."/>
            <person name="Serror P."/>
            <person name="Shin B.-S."/>
            <person name="Soldo B."/>
            <person name="Sorokin A."/>
            <person name="Tacconi E."/>
            <person name="Takagi T."/>
            <person name="Takahashi H."/>
            <person name="Takemaru K."/>
            <person name="Takeuchi M."/>
            <person name="Tamakoshi A."/>
            <person name="Tanaka T."/>
            <person name="Terpstra P."/>
            <person name="Tognoni A."/>
            <person name="Tosato V."/>
            <person name="Uchiyama S."/>
            <person name="Vandenbol M."/>
            <person name="Vannier F."/>
            <person name="Vassarotti A."/>
            <person name="Viari A."/>
            <person name="Wambutt R."/>
            <person name="Wedler E."/>
            <person name="Wedler H."/>
            <person name="Weitzenegger T."/>
            <person name="Winters P."/>
            <person name="Wipat A."/>
            <person name="Yamamoto H."/>
            <person name="Yamane K."/>
            <person name="Yasumoto K."/>
            <person name="Yata K."/>
            <person name="Yoshida K."/>
            <person name="Yoshikawa H.-F."/>
            <person name="Zumstein E."/>
            <person name="Yoshikawa H."/>
            <person name="Danchin A."/>
        </authorList>
    </citation>
    <scope>NUCLEOTIDE SEQUENCE [LARGE SCALE GENOMIC DNA]</scope>
    <source>
        <strain>168</strain>
    </source>
</reference>
<organism>
    <name type="scientific">Bacillus subtilis (strain 168)</name>
    <dbReference type="NCBI Taxonomy" id="224308"/>
    <lineage>
        <taxon>Bacteria</taxon>
        <taxon>Bacillati</taxon>
        <taxon>Bacillota</taxon>
        <taxon>Bacilli</taxon>
        <taxon>Bacillales</taxon>
        <taxon>Bacillaceae</taxon>
        <taxon>Bacillus</taxon>
    </lineage>
</organism>
<protein>
    <recommendedName>
        <fullName>Uncharacterized protein YxiJ</fullName>
    </recommendedName>
</protein>
<sequence>MLQKLRKRQRELEEKQYPDELYGFEAEIYEFFMLVAGSLDYVLANKRIPRHQRRSLEKSFFELYPDILPDMIKNDKDLYHHILLYEQVRQEICVALSN</sequence>
<keyword id="KW-1185">Reference proteome</keyword>
<dbReference type="EMBL" id="D83026">
    <property type="protein sequence ID" value="BAA11689.1"/>
    <property type="molecule type" value="Genomic_DNA"/>
</dbReference>
<dbReference type="EMBL" id="AL009126">
    <property type="protein sequence ID" value="CAB15951.1"/>
    <property type="molecule type" value="Genomic_DNA"/>
</dbReference>
<dbReference type="PIR" id="F70077">
    <property type="entry name" value="F70077"/>
</dbReference>
<dbReference type="RefSeq" id="NP_391794.1">
    <property type="nucleotide sequence ID" value="NC_000964.3"/>
</dbReference>
<dbReference type="RefSeq" id="WP_003227182.1">
    <property type="nucleotide sequence ID" value="NZ_OZ025638.1"/>
</dbReference>
<dbReference type="FunCoup" id="P42320">
    <property type="interactions" value="21"/>
</dbReference>
<dbReference type="STRING" id="224308.BSU39150"/>
<dbReference type="PaxDb" id="224308-BSU39150"/>
<dbReference type="EnsemblBacteria" id="CAB15951">
    <property type="protein sequence ID" value="CAB15951"/>
    <property type="gene ID" value="BSU_39150"/>
</dbReference>
<dbReference type="GeneID" id="937504"/>
<dbReference type="KEGG" id="bsu:BSU39150"/>
<dbReference type="PATRIC" id="fig|224308.179.peg.4239"/>
<dbReference type="eggNOG" id="ENOG5030PIA">
    <property type="taxonomic scope" value="Bacteria"/>
</dbReference>
<dbReference type="InParanoid" id="P42320"/>
<dbReference type="OrthoDB" id="2083321at2"/>
<dbReference type="BioCyc" id="BSUB:BSU39150-MONOMER"/>
<dbReference type="Proteomes" id="UP000001570">
    <property type="component" value="Chromosome"/>
</dbReference>
<dbReference type="InterPro" id="IPR025551">
    <property type="entry name" value="WapI/YxiJ-like"/>
</dbReference>
<dbReference type="Pfam" id="PF14176">
    <property type="entry name" value="YxiJ"/>
    <property type="match status" value="1"/>
</dbReference>
<proteinExistence type="predicted"/>
<accession>P42320</accession>
<feature type="chain" id="PRO_0000050028" description="Uncharacterized protein YxiJ">
    <location>
        <begin position="1"/>
        <end position="98"/>
    </location>
</feature>
<name>YXIJ_BACSU</name>
<gene>
    <name type="primary">yxiJ</name>
    <name type="ordered locus">BSU39150</name>
    <name type="ORF">SS8A</name>
</gene>